<proteinExistence type="evidence at protein level"/>
<evidence type="ECO:0000250" key="1"/>
<evidence type="ECO:0000250" key="2">
    <source>
        <dbReference type="UniProtKB" id="P32194"/>
    </source>
</evidence>
<evidence type="ECO:0000255" key="3"/>
<evidence type="ECO:0000256" key="4">
    <source>
        <dbReference type="SAM" id="MobiDB-lite"/>
    </source>
</evidence>
<evidence type="ECO:0000269" key="5">
    <source>
    </source>
</evidence>
<evidence type="ECO:0000305" key="6"/>
<evidence type="ECO:0007829" key="7">
    <source>
        <dbReference type="PDB" id="1KWI"/>
    </source>
</evidence>
<evidence type="ECO:0007829" key="8">
    <source>
        <dbReference type="PDB" id="2MZ6"/>
    </source>
</evidence>
<protein>
    <recommendedName>
        <fullName>Protegrin-3</fullName>
        <shortName>PG-3</shortName>
    </recommendedName>
</protein>
<name>PG3_PIG</name>
<organism>
    <name type="scientific">Sus scrofa</name>
    <name type="common">Pig</name>
    <dbReference type="NCBI Taxonomy" id="9823"/>
    <lineage>
        <taxon>Eukaryota</taxon>
        <taxon>Metazoa</taxon>
        <taxon>Chordata</taxon>
        <taxon>Craniata</taxon>
        <taxon>Vertebrata</taxon>
        <taxon>Euteleostomi</taxon>
        <taxon>Mammalia</taxon>
        <taxon>Eutheria</taxon>
        <taxon>Laurasiatheria</taxon>
        <taxon>Artiodactyla</taxon>
        <taxon>Suina</taxon>
        <taxon>Suidae</taxon>
        <taxon>Sus</taxon>
    </lineage>
</organism>
<keyword id="KW-0002">3D-structure</keyword>
<keyword id="KW-0027">Amidation</keyword>
<keyword id="KW-0044">Antibiotic</keyword>
<keyword id="KW-0929">Antimicrobial</keyword>
<keyword id="KW-0903">Direct protein sequencing</keyword>
<keyword id="KW-1015">Disulfide bond</keyword>
<keyword id="KW-1185">Reference proteome</keyword>
<keyword id="KW-0964">Secreted</keyword>
<keyword id="KW-0732">Signal</keyword>
<feature type="signal peptide" evidence="3">
    <location>
        <begin position="1"/>
        <end position="29"/>
    </location>
</feature>
<feature type="propeptide" id="PRO_0000004748" evidence="5">
    <location>
        <begin position="30"/>
        <end position="130"/>
    </location>
</feature>
<feature type="peptide" id="PRO_0000004749" description="Protegrin-3">
    <location>
        <begin position="131"/>
        <end position="148"/>
    </location>
</feature>
<feature type="region of interest" description="Disordered" evidence="4">
    <location>
        <begin position="61"/>
        <end position="80"/>
    </location>
</feature>
<feature type="modified residue" description="Arginine amide" evidence="2">
    <location>
        <position position="148"/>
    </location>
</feature>
<feature type="disulfide bond">
    <location>
        <begin position="85"/>
        <end position="96"/>
    </location>
</feature>
<feature type="disulfide bond">
    <location>
        <begin position="107"/>
        <end position="124"/>
    </location>
</feature>
<feature type="disulfide bond" evidence="1">
    <location>
        <begin position="136"/>
        <end position="145"/>
    </location>
</feature>
<feature type="disulfide bond" evidence="1">
    <location>
        <begin position="138"/>
        <end position="143"/>
    </location>
</feature>
<feature type="helix" evidence="7">
    <location>
        <begin position="32"/>
        <end position="48"/>
    </location>
</feature>
<feature type="strand" evidence="7">
    <location>
        <begin position="51"/>
        <end position="60"/>
    </location>
</feature>
<feature type="strand" evidence="7">
    <location>
        <begin position="74"/>
        <end position="88"/>
    </location>
</feature>
<feature type="helix" evidence="7">
    <location>
        <begin position="93"/>
        <end position="95"/>
    </location>
</feature>
<feature type="strand" evidence="7">
    <location>
        <begin position="104"/>
        <end position="111"/>
    </location>
</feature>
<feature type="strand" evidence="7">
    <location>
        <begin position="121"/>
        <end position="126"/>
    </location>
</feature>
<feature type="strand" evidence="8">
    <location>
        <begin position="135"/>
        <end position="139"/>
    </location>
</feature>
<feature type="strand" evidence="8">
    <location>
        <begin position="142"/>
        <end position="147"/>
    </location>
</feature>
<dbReference type="EMBL" id="X83267">
    <property type="protein sequence ID" value="CAA58240.1"/>
    <property type="molecule type" value="mRNA"/>
</dbReference>
<dbReference type="EMBL" id="X84095">
    <property type="protein sequence ID" value="CAA58891.1"/>
    <property type="molecule type" value="Genomic_DNA"/>
</dbReference>
<dbReference type="PIR" id="S66285">
    <property type="entry name" value="A53895"/>
</dbReference>
<dbReference type="PDB" id="1KWI">
    <property type="method" value="X-ray"/>
    <property type="resolution" value="2.19 A"/>
    <property type="chains" value="A=30-130"/>
</dbReference>
<dbReference type="PDB" id="1LXE">
    <property type="method" value="X-ray"/>
    <property type="resolution" value="2.50 A"/>
    <property type="chains" value="A=30-130"/>
</dbReference>
<dbReference type="PDB" id="1PFP">
    <property type="method" value="X-ray"/>
    <property type="resolution" value="2.30 A"/>
    <property type="chains" value="A=30-130"/>
</dbReference>
<dbReference type="PDB" id="2MZ6">
    <property type="method" value="NMR"/>
    <property type="chains" value="A/B=131-148"/>
</dbReference>
<dbReference type="PDBsum" id="1KWI"/>
<dbReference type="PDBsum" id="1LXE"/>
<dbReference type="PDBsum" id="1PFP"/>
<dbReference type="PDBsum" id="2MZ6"/>
<dbReference type="BMRB" id="P32196"/>
<dbReference type="SMR" id="P32196"/>
<dbReference type="FunCoup" id="P32196">
    <property type="interactions" value="103"/>
</dbReference>
<dbReference type="PeptideAtlas" id="P32196"/>
<dbReference type="CTD" id="100144484"/>
<dbReference type="InParanoid" id="P32196"/>
<dbReference type="EvolutionaryTrace" id="P32196"/>
<dbReference type="Proteomes" id="UP000008227">
    <property type="component" value="Chromosome 13"/>
</dbReference>
<dbReference type="Proteomes" id="UP000314985">
    <property type="component" value="Unplaced"/>
</dbReference>
<dbReference type="Proteomes" id="UP000694570">
    <property type="component" value="Unplaced"/>
</dbReference>
<dbReference type="Proteomes" id="UP000694571">
    <property type="component" value="Unplaced"/>
</dbReference>
<dbReference type="Proteomes" id="UP000694720">
    <property type="component" value="Unplaced"/>
</dbReference>
<dbReference type="Proteomes" id="UP000694722">
    <property type="component" value="Unplaced"/>
</dbReference>
<dbReference type="Proteomes" id="UP000694723">
    <property type="component" value="Unplaced"/>
</dbReference>
<dbReference type="Proteomes" id="UP000694724">
    <property type="component" value="Unplaced"/>
</dbReference>
<dbReference type="Proteomes" id="UP000694725">
    <property type="component" value="Unplaced"/>
</dbReference>
<dbReference type="Proteomes" id="UP000694726">
    <property type="component" value="Unplaced"/>
</dbReference>
<dbReference type="Proteomes" id="UP000694727">
    <property type="component" value="Unplaced"/>
</dbReference>
<dbReference type="Proteomes" id="UP000694728">
    <property type="component" value="Unplaced"/>
</dbReference>
<dbReference type="Bgee" id="ENSSSCG00000011349">
    <property type="expression patterns" value="Expressed in epididymis and 22 other cell types or tissues"/>
</dbReference>
<dbReference type="ExpressionAtlas" id="P32196">
    <property type="expression patterns" value="baseline and differential"/>
</dbReference>
<dbReference type="GO" id="GO:0005615">
    <property type="term" value="C:extracellular space"/>
    <property type="evidence" value="ECO:0000318"/>
    <property type="project" value="GO_Central"/>
</dbReference>
<dbReference type="GO" id="GO:0001530">
    <property type="term" value="F:lipopolysaccharide binding"/>
    <property type="evidence" value="ECO:0000318"/>
    <property type="project" value="GO_Central"/>
</dbReference>
<dbReference type="GO" id="GO:0061844">
    <property type="term" value="P:antimicrobial humoral immune response mediated by antimicrobial peptide"/>
    <property type="evidence" value="ECO:0000318"/>
    <property type="project" value="GO_Central"/>
</dbReference>
<dbReference type="GO" id="GO:0050829">
    <property type="term" value="P:defense response to Gram-negative bacterium"/>
    <property type="evidence" value="ECO:0000318"/>
    <property type="project" value="GO_Central"/>
</dbReference>
<dbReference type="GO" id="GO:0050830">
    <property type="term" value="P:defense response to Gram-positive bacterium"/>
    <property type="evidence" value="ECO:0000318"/>
    <property type="project" value="GO_Central"/>
</dbReference>
<dbReference type="GO" id="GO:0045087">
    <property type="term" value="P:innate immune response"/>
    <property type="evidence" value="ECO:0000318"/>
    <property type="project" value="GO_Central"/>
</dbReference>
<dbReference type="FunFam" id="3.10.450.10:FF:000003">
    <property type="entry name" value="Cathelicidin antimicrobial peptide"/>
    <property type="match status" value="1"/>
</dbReference>
<dbReference type="Gene3D" id="3.10.450.10">
    <property type="match status" value="1"/>
</dbReference>
<dbReference type="InterPro" id="IPR001894">
    <property type="entry name" value="Cathelicidin-like"/>
</dbReference>
<dbReference type="InterPro" id="IPR018216">
    <property type="entry name" value="Cathelicidin_CS"/>
</dbReference>
<dbReference type="InterPro" id="IPR046350">
    <property type="entry name" value="Cystatin_sf"/>
</dbReference>
<dbReference type="PANTHER" id="PTHR10206">
    <property type="entry name" value="CATHELICIDIN"/>
    <property type="match status" value="1"/>
</dbReference>
<dbReference type="PANTHER" id="PTHR10206:SF2">
    <property type="entry name" value="CATHELICIDIN ANTIMICROBIAL PEPTIDE"/>
    <property type="match status" value="1"/>
</dbReference>
<dbReference type="Pfam" id="PF00666">
    <property type="entry name" value="Cathelicidins"/>
    <property type="match status" value="1"/>
</dbReference>
<dbReference type="SUPFAM" id="SSF54403">
    <property type="entry name" value="Cystatin/monellin"/>
    <property type="match status" value="1"/>
</dbReference>
<dbReference type="PROSITE" id="PS00946">
    <property type="entry name" value="CATHELICIDINS_1"/>
    <property type="match status" value="1"/>
</dbReference>
<dbReference type="PROSITE" id="PS00947">
    <property type="entry name" value="CATHELICIDINS_2"/>
    <property type="match status" value="1"/>
</dbReference>
<accession>P32196</accession>
<gene>
    <name type="primary">NPG3</name>
</gene>
<reference key="1">
    <citation type="journal article" date="1994" name="FEBS Lett.">
        <title>Identification of a new member of the protegrin family by cDNA cloning.</title>
        <authorList>
            <person name="Zhao C."/>
            <person name="Liu L."/>
            <person name="Lehrer R.I."/>
        </authorList>
    </citation>
    <scope>NUCLEOTIDE SEQUENCE [MRNA]</scope>
    <source>
        <tissue>Bone marrow</tissue>
    </source>
</reference>
<reference key="2">
    <citation type="journal article" date="1995" name="FEBS Lett.">
        <title>The structure of porcine protegrin genes.</title>
        <authorList>
            <person name="Zhao C."/>
            <person name="Ganz T."/>
            <person name="Lehrer R.I."/>
        </authorList>
    </citation>
    <scope>NUCLEOTIDE SEQUENCE [GENOMIC DNA]</scope>
    <source>
        <strain>Red Duroc</strain>
    </source>
</reference>
<reference key="3">
    <citation type="journal article" date="1993" name="FEBS Lett.">
        <title>Protegrins: leukocyte antimicrobial peptides that combine features of corticostatic defensins and tachyplesins.</title>
        <authorList>
            <person name="Kokryakov V.N."/>
            <person name="Harwig S.S.L."/>
            <person name="Panyutich E.A."/>
            <person name="Shevchenko A.A."/>
            <person name="Aleshina G.M."/>
            <person name="Shamova O.V."/>
            <person name="Korneva H.A."/>
            <person name="Lehrer R.I."/>
        </authorList>
    </citation>
    <scope>PROTEIN SEQUENCE OF 131-148</scope>
    <source>
        <tissue>Leukocyte</tissue>
    </source>
</reference>
<reference key="4">
    <citation type="journal article" date="2002" name="Structure">
        <title>Structure of the cathelicidin motif of protegrin-3 precursor: structural insights into the activation mechanism of an antimicrobial protein.</title>
        <authorList>
            <person name="Sanchez J.F."/>
            <person name="Hoh F."/>
            <person name="Strub M.-P."/>
            <person name="Aumelas A."/>
            <person name="Dumas C."/>
        </authorList>
    </citation>
    <scope>X-RAY CRYSTALLOGRAPHY (2.19 ANGSTROMS) OF 30-130</scope>
    <scope>DISULFIDE BONDS</scope>
</reference>
<reference key="5">
    <citation type="journal article" date="2003" name="Structure">
        <title>Selenomethionine and selenocysteine double labeling strategy for crystallographic phasing.</title>
        <authorList>
            <person name="Strub M.-P."/>
            <person name="Hoh F."/>
            <person name="Sanchez J.F."/>
            <person name="Strub J.-M."/>
            <person name="Bock A."/>
            <person name="Aumelas A."/>
            <person name="Dumas C."/>
        </authorList>
    </citation>
    <scope>X-RAY CRYSTALLOGRAPHY (2.3 ANGSTROMS) OF 30-130</scope>
    <scope>DISULFIDE BONDS</scope>
</reference>
<sequence length="149" mass="16578">METQRASLCLGRWSLWLLLLALVVPSASAQALSYREAVLRAVDRLNEQSSEANLYRLLELDQPPKADEDPGTPKPVSFTVKETVCPRPTRQPPELCDFKENGRVKQCVGTVTLDQIKDPLDITCNEVQGVRGGGLCYCRRRFCVCVGRG</sequence>
<comment type="function">
    <text>Microbicidal activity. Active against E.coli, Listeria monocytogenes and C.albicans, in vitro.</text>
</comment>
<comment type="subcellular location">
    <subcellularLocation>
        <location>Secreted</location>
    </subcellularLocation>
</comment>
<comment type="similarity">
    <text evidence="6">Belongs to the cathelicidin family.</text>
</comment>